<evidence type="ECO:0000255" key="1"/>
<evidence type="ECO:0000269" key="2">
    <source>
    </source>
</evidence>
<evidence type="ECO:0000269" key="3">
    <source>
    </source>
</evidence>
<evidence type="ECO:0000305" key="4">
    <source>
    </source>
</evidence>
<evidence type="ECO:0000305" key="5">
    <source>
    </source>
</evidence>
<gene>
    <name type="ordered locus">BTH_II0599</name>
</gene>
<proteinExistence type="inferred from homology"/>
<name>Y3999_BURTA</name>
<feature type="chain" id="PRO_0000446876" description="Probable inner membrane protein BTH_II0599">
    <location>
        <begin position="1"/>
        <end position="270"/>
    </location>
</feature>
<feature type="transmembrane region" description="Helical" evidence="1">
    <location>
        <begin position="24"/>
        <end position="44"/>
    </location>
</feature>
<feature type="transmembrane region" description="Helical" evidence="1">
    <location>
        <begin position="45"/>
        <end position="65"/>
    </location>
</feature>
<feature type="transmembrane region" description="Helical" evidence="1">
    <location>
        <begin position="98"/>
        <end position="118"/>
    </location>
</feature>
<feature type="transmembrane region" description="Helical" evidence="1">
    <location>
        <begin position="150"/>
        <end position="170"/>
    </location>
</feature>
<feature type="transmembrane region" description="Helical" evidence="1">
    <location>
        <begin position="198"/>
        <end position="218"/>
    </location>
</feature>
<feature type="transmembrane region" description="Helical" evidence="1">
    <location>
        <begin position="226"/>
        <end position="246"/>
    </location>
</feature>
<accession>Q2T7Q0</accession>
<protein>
    <recommendedName>
        <fullName>Probable inner membrane protein BTH_II0599</fullName>
    </recommendedName>
</protein>
<keyword id="KW-0997">Cell inner membrane</keyword>
<keyword id="KW-1003">Cell membrane</keyword>
<keyword id="KW-0472">Membrane</keyword>
<keyword id="KW-0812">Transmembrane</keyword>
<keyword id="KW-1133">Transmembrane helix</keyword>
<comment type="function">
    <text evidence="3 4">(Microbial infection) Probably transports the toxic C-terminal region of CdiA-2 from B.pseudomallei strain 1026b across the inner membrane to the cytoplasm, where CdiA has a toxic effect. Expression in E.coli makes the bacteria sensitive to the tRNase domain of B.pseudomallei strain 1026b CdiA-2.</text>
</comment>
<comment type="subcellular location">
    <subcellularLocation>
        <location evidence="4 5">Cell inner membrane</location>
        <topology evidence="1">Multi-pass membrane protein</topology>
    </subcellularLocation>
</comment>
<comment type="disruption phenotype">
    <text evidence="2">Disruption confers resistance to cellular contact-dependent growth inhibition (CDI) CdiA-2 of B.pseudomallei strain 1026b, but not to endogenous CdiA. Unchanged binding to B.pseudomallei strain 1026b inhibitor cells.</text>
</comment>
<organism>
    <name type="scientific">Burkholderia thailandensis (strain ATCC 700388 / DSM 13276 / CCUG 48851 / CIP 106301 / E264)</name>
    <dbReference type="NCBI Taxonomy" id="271848"/>
    <lineage>
        <taxon>Bacteria</taxon>
        <taxon>Pseudomonadati</taxon>
        <taxon>Pseudomonadota</taxon>
        <taxon>Betaproteobacteria</taxon>
        <taxon>Burkholderiales</taxon>
        <taxon>Burkholderiaceae</taxon>
        <taxon>Burkholderia</taxon>
        <taxon>pseudomallei group</taxon>
    </lineage>
</organism>
<reference key="1">
    <citation type="journal article" date="2005" name="BMC Genomics">
        <title>Bacterial genome adaptation to niches: divergence of the potential virulence genes in three Burkholderia species of different survival strategies.</title>
        <authorList>
            <person name="Kim H.S."/>
            <person name="Schell M.A."/>
            <person name="Yu Y."/>
            <person name="Ulrich R.L."/>
            <person name="Sarria S.H."/>
            <person name="Nierman W.C."/>
            <person name="DeShazer D."/>
        </authorList>
    </citation>
    <scope>NUCLEOTIDE SEQUENCE [LARGE SCALE GENOMIC DNA]</scope>
    <source>
        <strain>ATCC 700388 / DSM 13276 / CCUG 48851 / CIP 106301 / E264</strain>
    </source>
</reference>
<reference key="2">
    <citation type="journal article" date="2015" name="PLoS ONE">
        <title>Genetic analysis of the CDI pathway from Burkholderia pseudomallei 1026b.</title>
        <authorList>
            <person name="Koskiniemi S."/>
            <person name="Garza-Sanchez F."/>
            <person name="Edman N."/>
            <person name="Chaudhuri S."/>
            <person name="Poole S.J."/>
            <person name="Manoil C."/>
            <person name="Hayes C.S."/>
            <person name="Low D.A."/>
        </authorList>
    </citation>
    <scope>FUNCTION (MICROBIAL INFECTION)</scope>
    <scope>DISRUPTION PHENOTYPE</scope>
    <source>
        <strain>ATCC 700388 / DSM 13276 / CCUG 48851 / CIP 106301 / E264</strain>
    </source>
</reference>
<reference key="3">
    <citation type="journal article" date="2015" name="Proc. Natl. Acad. Sci. U.S.A.">
        <title>Contact-dependent growth inhibition toxins exploit multiple independent cell-entry pathways.</title>
        <authorList>
            <person name="Willett J.L."/>
            <person name="Gucinski G.C."/>
            <person name="Fatherree J.P."/>
            <person name="Low D.A."/>
            <person name="Hayes C.S."/>
        </authorList>
    </citation>
    <scope>RECEPTOR FOR CDI TOXIN ENTRY INTO TARGET CELL CYTOPLASM (MICROBIAL INFECTION)</scope>
    <source>
        <strain>ATCC 700388 / DSM 13276 / CCUG 48851 / CIP 106301 / E264</strain>
    </source>
</reference>
<sequence length="270" mass="28963">MQLIEVSAKTGYVWFRQGIWLFRRNPLAFVTLFFTYLLAMMLVSLVPVIGAALPLLLIPGIAVGFMAACRDTIAGKQVLPTILIDGFRSYGPIVTQRLLTLGGLYIVSMAAVFACSALGDGGTLLKIMFGLGAENLGPDALESPGFKIAALIAAALYAPVAMMFWFAPVLTAWHDVPPVKALFFSVVSCWRNKGAFTVYGLLWFALALGVSFGLAALMQALGASAYALMVMMPASIVITAMLYCSFYATYRGCFGVQEPGAPKLPNTSDR</sequence>
<dbReference type="EMBL" id="CP000085">
    <property type="protein sequence ID" value="ABC35750.1"/>
    <property type="molecule type" value="Genomic_DNA"/>
</dbReference>
<dbReference type="RefSeq" id="WP_009895708.1">
    <property type="nucleotide sequence ID" value="NZ_CP008786.1"/>
</dbReference>
<dbReference type="GeneID" id="45118091"/>
<dbReference type="KEGG" id="bte:BTH_II0599"/>
<dbReference type="HOGENOM" id="CLU_072075_2_0_4"/>
<dbReference type="Proteomes" id="UP000001930">
    <property type="component" value="Chromosome II"/>
</dbReference>
<dbReference type="GO" id="GO:0005886">
    <property type="term" value="C:plasma membrane"/>
    <property type="evidence" value="ECO:0007669"/>
    <property type="project" value="UniProtKB-SubCell"/>
</dbReference>
<dbReference type="InterPro" id="IPR047798">
    <property type="entry name" value="BPSS1780-like"/>
</dbReference>
<dbReference type="NCBIfam" id="NF041043">
    <property type="entry name" value="BPSS1780_fam"/>
    <property type="match status" value="1"/>
</dbReference>